<keyword id="KW-1015">Disulfide bond</keyword>
<keyword id="KW-0339">Growth factor</keyword>
<keyword id="KW-1185">Reference proteome</keyword>
<keyword id="KW-0964">Secreted</keyword>
<keyword id="KW-0732">Signal</keyword>
<accession>P17647</accession>
<name>IGF1_CAVPO</name>
<sequence>MHAVSSSHLFYLAFCLLVLTSSATAGPETLCGAELVDALQFVCGDRGFYFNKPTGYGSSSRRAPQTGIVDECCFRSCDLRRLEMYCAPLKPAKSARSVRAQRHTDMPKTQKEVHLKNASRGSAGNKNYRM</sequence>
<gene>
    <name evidence="2" type="primary">IGF1</name>
    <name evidence="2" type="synonym">IGF-1</name>
</gene>
<evidence type="ECO:0000250" key="1">
    <source>
        <dbReference type="UniProtKB" id="P05017"/>
    </source>
</evidence>
<evidence type="ECO:0000250" key="2">
    <source>
        <dbReference type="UniProtKB" id="P05019"/>
    </source>
</evidence>
<evidence type="ECO:0000250" key="3">
    <source>
        <dbReference type="UniProtKB" id="P08025"/>
    </source>
</evidence>
<evidence type="ECO:0000256" key="4">
    <source>
        <dbReference type="SAM" id="MobiDB-lite"/>
    </source>
</evidence>
<evidence type="ECO:0000303" key="5">
    <source>
    </source>
</evidence>
<evidence type="ECO:0000305" key="6"/>
<feature type="signal peptide">
    <location>
        <begin position="1"/>
        <end position="25"/>
    </location>
</feature>
<feature type="chain" id="PRO_0000015655" description="Insulin-like growth factor 1">
    <location>
        <begin position="26"/>
        <end position="95"/>
    </location>
</feature>
<feature type="propeptide" id="PRO_0000015656" description="E peptide">
    <location>
        <begin position="96"/>
        <end position="130"/>
    </location>
</feature>
<feature type="region of interest" description="B">
    <location>
        <begin position="26"/>
        <end position="54"/>
    </location>
</feature>
<feature type="region of interest" description="C">
    <location>
        <begin position="55"/>
        <end position="66"/>
    </location>
</feature>
<feature type="region of interest" description="A">
    <location>
        <begin position="67"/>
        <end position="87"/>
    </location>
</feature>
<feature type="region of interest" description="D">
    <location>
        <begin position="88"/>
        <end position="95"/>
    </location>
</feature>
<feature type="region of interest" description="Disordered" evidence="4">
    <location>
        <begin position="97"/>
        <end position="130"/>
    </location>
</feature>
<feature type="compositionally biased region" description="Basic and acidic residues" evidence="4">
    <location>
        <begin position="102"/>
        <end position="115"/>
    </location>
</feature>
<feature type="compositionally biased region" description="Polar residues" evidence="4">
    <location>
        <begin position="119"/>
        <end position="130"/>
    </location>
</feature>
<feature type="disulfide bond" evidence="2">
    <location>
        <begin position="31"/>
        <end position="73"/>
    </location>
</feature>
<feature type="disulfide bond" evidence="2">
    <location>
        <begin position="43"/>
        <end position="86"/>
    </location>
</feature>
<feature type="disulfide bond" evidence="2">
    <location>
        <begin position="72"/>
        <end position="77"/>
    </location>
</feature>
<organism>
    <name type="scientific">Cavia porcellus</name>
    <name type="common">Guinea pig</name>
    <dbReference type="NCBI Taxonomy" id="10141"/>
    <lineage>
        <taxon>Eukaryota</taxon>
        <taxon>Metazoa</taxon>
        <taxon>Chordata</taxon>
        <taxon>Craniata</taxon>
        <taxon>Vertebrata</taxon>
        <taxon>Euteleostomi</taxon>
        <taxon>Mammalia</taxon>
        <taxon>Eutheria</taxon>
        <taxon>Euarchontoglires</taxon>
        <taxon>Glires</taxon>
        <taxon>Rodentia</taxon>
        <taxon>Hystricomorpha</taxon>
        <taxon>Caviidae</taxon>
        <taxon>Cavia</taxon>
    </lineage>
</organism>
<dbReference type="EMBL" id="X52951">
    <property type="protein sequence ID" value="CAA37127.1"/>
    <property type="molecule type" value="mRNA"/>
</dbReference>
<dbReference type="PIR" id="S12719">
    <property type="entry name" value="IGGP1"/>
</dbReference>
<dbReference type="RefSeq" id="NP_001166437.2">
    <property type="nucleotide sequence ID" value="NM_001172966.1"/>
</dbReference>
<dbReference type="RefSeq" id="XP_013014489.1">
    <property type="nucleotide sequence ID" value="XM_013159035.1"/>
</dbReference>
<dbReference type="RefSeq" id="XP_013014490.1">
    <property type="nucleotide sequence ID" value="XM_013159036.1"/>
</dbReference>
<dbReference type="RefSeq" id="XP_013014491.1">
    <property type="nucleotide sequence ID" value="XM_013159037.1"/>
</dbReference>
<dbReference type="RefSeq" id="XP_013014492.1">
    <property type="nucleotide sequence ID" value="XM_013159038.1"/>
</dbReference>
<dbReference type="BMRB" id="P17647"/>
<dbReference type="SMR" id="P17647"/>
<dbReference type="STRING" id="10141.ENSCPOP00000031938"/>
<dbReference type="GeneID" id="100135551"/>
<dbReference type="KEGG" id="cpoc:100135551"/>
<dbReference type="CTD" id="3479"/>
<dbReference type="eggNOG" id="ENOG502RCAB">
    <property type="taxonomic scope" value="Eukaryota"/>
</dbReference>
<dbReference type="HOGENOM" id="CLU_123939_0_0_1"/>
<dbReference type="InParanoid" id="P17647"/>
<dbReference type="OrthoDB" id="8936076at2759"/>
<dbReference type="Proteomes" id="UP000005447">
    <property type="component" value="Unassembled WGS sequence"/>
</dbReference>
<dbReference type="GO" id="GO:0035867">
    <property type="term" value="C:alphav-beta3 integrin-IGF-1-IGF1R complex"/>
    <property type="evidence" value="ECO:0000250"/>
    <property type="project" value="UniProtKB"/>
</dbReference>
<dbReference type="GO" id="GO:0070382">
    <property type="term" value="C:exocytic vesicle"/>
    <property type="evidence" value="ECO:0000250"/>
    <property type="project" value="UniProtKB"/>
</dbReference>
<dbReference type="GO" id="GO:0005615">
    <property type="term" value="C:extracellular space"/>
    <property type="evidence" value="ECO:0007669"/>
    <property type="project" value="InterPro"/>
</dbReference>
<dbReference type="GO" id="GO:0008083">
    <property type="term" value="F:growth factor activity"/>
    <property type="evidence" value="ECO:0007669"/>
    <property type="project" value="UniProtKB-KW"/>
</dbReference>
<dbReference type="GO" id="GO:0005179">
    <property type="term" value="F:hormone activity"/>
    <property type="evidence" value="ECO:0007669"/>
    <property type="project" value="InterPro"/>
</dbReference>
<dbReference type="GO" id="GO:0005159">
    <property type="term" value="F:insulin-like growth factor receptor binding"/>
    <property type="evidence" value="ECO:0000250"/>
    <property type="project" value="UniProtKB"/>
</dbReference>
<dbReference type="GO" id="GO:0008283">
    <property type="term" value="P:cell population proliferation"/>
    <property type="evidence" value="ECO:0007669"/>
    <property type="project" value="TreeGrafter"/>
</dbReference>
<dbReference type="GO" id="GO:0048009">
    <property type="term" value="P:insulin-like growth factor receptor signaling pathway"/>
    <property type="evidence" value="ECO:0000250"/>
    <property type="project" value="UniProtKB"/>
</dbReference>
<dbReference type="GO" id="GO:0043066">
    <property type="term" value="P:negative regulation of apoptotic process"/>
    <property type="evidence" value="ECO:0000250"/>
    <property type="project" value="UniProtKB"/>
</dbReference>
<dbReference type="GO" id="GO:0090201">
    <property type="term" value="P:negative regulation of release of cytochrome c from mitochondria"/>
    <property type="evidence" value="ECO:0000250"/>
    <property type="project" value="UniProtKB"/>
</dbReference>
<dbReference type="GO" id="GO:0034392">
    <property type="term" value="P:negative regulation of smooth muscle cell apoptotic process"/>
    <property type="evidence" value="ECO:0000250"/>
    <property type="project" value="UniProtKB"/>
</dbReference>
<dbReference type="GO" id="GO:0008284">
    <property type="term" value="P:positive regulation of cell population proliferation"/>
    <property type="evidence" value="ECO:0000250"/>
    <property type="project" value="UniProtKB"/>
</dbReference>
<dbReference type="GO" id="GO:0046326">
    <property type="term" value="P:positive regulation of D-glucose import"/>
    <property type="evidence" value="ECO:0000250"/>
    <property type="project" value="UniProtKB"/>
</dbReference>
<dbReference type="GO" id="GO:0045725">
    <property type="term" value="P:positive regulation of glycogen biosynthetic process"/>
    <property type="evidence" value="ECO:0000250"/>
    <property type="project" value="UniProtKB"/>
</dbReference>
<dbReference type="GO" id="GO:0043410">
    <property type="term" value="P:positive regulation of MAPK cascade"/>
    <property type="evidence" value="ECO:0000250"/>
    <property type="project" value="UniProtKB"/>
</dbReference>
<dbReference type="GO" id="GO:0051897">
    <property type="term" value="P:positive regulation of phosphatidylinositol 3-kinase/protein kinase B signal transduction"/>
    <property type="evidence" value="ECO:0007669"/>
    <property type="project" value="TreeGrafter"/>
</dbReference>
<dbReference type="CDD" id="cd04368">
    <property type="entry name" value="IlGF"/>
    <property type="match status" value="1"/>
</dbReference>
<dbReference type="FunFam" id="1.10.100.10:FF:000001">
    <property type="entry name" value="insulin-like growth factor I isoform X1"/>
    <property type="match status" value="1"/>
</dbReference>
<dbReference type="Gene3D" id="1.10.100.10">
    <property type="entry name" value="Insulin-like"/>
    <property type="match status" value="1"/>
</dbReference>
<dbReference type="InterPro" id="IPR022341">
    <property type="entry name" value="IGF-I"/>
</dbReference>
<dbReference type="InterPro" id="IPR016179">
    <property type="entry name" value="Insulin-like"/>
</dbReference>
<dbReference type="InterPro" id="IPR022350">
    <property type="entry name" value="Insulin-like_growth_factor"/>
</dbReference>
<dbReference type="InterPro" id="IPR036438">
    <property type="entry name" value="Insulin-like_sf"/>
</dbReference>
<dbReference type="InterPro" id="IPR022353">
    <property type="entry name" value="Insulin_CS"/>
</dbReference>
<dbReference type="InterPro" id="IPR022352">
    <property type="entry name" value="Insulin_family"/>
</dbReference>
<dbReference type="PANTHER" id="PTHR46845">
    <property type="entry name" value="INSULIN-LIKE GROWTH FACTOR I"/>
    <property type="match status" value="1"/>
</dbReference>
<dbReference type="PANTHER" id="PTHR46845:SF1">
    <property type="entry name" value="INSULIN-LIKE GROWTH FACTOR I"/>
    <property type="match status" value="1"/>
</dbReference>
<dbReference type="Pfam" id="PF00049">
    <property type="entry name" value="Insulin"/>
    <property type="match status" value="1"/>
</dbReference>
<dbReference type="PRINTS" id="PR02002">
    <property type="entry name" value="INSLNLIKEGF"/>
</dbReference>
<dbReference type="PRINTS" id="PR02005">
    <property type="entry name" value="INSLNLIKEGF1"/>
</dbReference>
<dbReference type="PRINTS" id="PR00276">
    <property type="entry name" value="INSULINFAMLY"/>
</dbReference>
<dbReference type="SMART" id="SM00078">
    <property type="entry name" value="IlGF"/>
    <property type="match status" value="1"/>
</dbReference>
<dbReference type="SUPFAM" id="SSF56994">
    <property type="entry name" value="Insulin-like"/>
    <property type="match status" value="1"/>
</dbReference>
<dbReference type="PROSITE" id="PS00262">
    <property type="entry name" value="INSULIN"/>
    <property type="match status" value="1"/>
</dbReference>
<reference key="1">
    <citation type="journal article" date="1990" name="Nucleic Acids Res.">
        <title>Sequence of a cDNA encoding guinea pig IGF-I.</title>
        <authorList>
            <person name="Bell G.I."/>
            <person name="Stempien M.M."/>
            <person name="Fong N.M."/>
            <person name="Scino S."/>
        </authorList>
    </citation>
    <scope>NUCLEOTIDE SEQUENCE [MRNA]</scope>
    <source>
        <tissue>Pancreas</tissue>
    </source>
</reference>
<proteinExistence type="evidence at transcript level"/>
<comment type="function">
    <text evidence="1 2 3">The insulin-like growth factors, isolated from plasma, are structurally and functionally related to insulin but have a much higher growth-promoting activity. May be a physiological regulator of [1-14C]-2-deoxy-D-glucose (2DG) transport and glycogen synthesis in osteoblasts. Stimulates glucose transport in bone-derived osteoblastic (PyMS) cells and is effective at much lower concentrations than insulin, not only regarding glycogen and DNA synthesis but also with regard to enhancing glucose uptake. May play a role in synapse maturation. Ca(2+)-dependent exocytosis of IGF1 is required for sensory perception of smell in the olfactory bulb. Acts as a ligand for IGF1R. Binds to the alpha subunit of IGF1R, leading to the activation of the intrinsic tyrosine kinase activity which autophosphorylates tyrosine residues in the beta subunit thus initiating a cascade of down-stream signaling events leading to activation of the PI3K-AKT/PKB and the Ras-MAPK pathways. Binds to integrins ITGAV:ITGB3 and ITGA6:ITGB4. Its binding to integrins and subsequent ternary complex formation with integrins and IGFR1 are essential for IGF1 signaling. Induces the phosphorylation and activation of IGFR1, MAPK3/ERK1, MAPK1/ERK2 and AKT1 (By similarity). As part of the MAPK/ERK signaling pathway, acts as a negative regulator of apoptosis in cardiomyocytes via promotion of STUB1/CHIP-mediated ubiquitination and degradation of ICER-type isoforms of CREM (By similarity).</text>
</comment>
<comment type="subunit">
    <text evidence="2">Forms a ternary complex with IGFR1 and ITGAV:ITGB3. Forms a ternary complex with IGFR1 and ITGA6:ITGB4. Forms a ternary complex with IGFBP3 and ALS.</text>
</comment>
<comment type="subcellular location">
    <subcellularLocation>
        <location evidence="1">Secreted</location>
    </subcellularLocation>
</comment>
<comment type="similarity">
    <text evidence="6">Belongs to the insulin family.</text>
</comment>
<protein>
    <recommendedName>
        <fullName evidence="2">Insulin-like growth factor 1</fullName>
    </recommendedName>
    <alternativeName>
        <fullName evidence="5">Insulin-like growth factor I</fullName>
        <shortName evidence="5">IGF-I</shortName>
    </alternativeName>
    <alternativeName>
        <fullName>Somatomedin</fullName>
    </alternativeName>
</protein>